<sequence length="2550" mass="277318">MSSAPIPQSEPLAIIGLACKYANGIDSPEALYEQVMAARCMHGAMPSNRMDASFYYHPTSEATGTSYSKGGYFLNCDLNAFDSPFFQLSEIDVMAMDPQQKMLLENVYHALENAGIPLKNAISSPTSVFVGCSNNDHLALANSDLLLSLKGKGTGTSPSILANRVSWFYDFQGTSQTIDTACSSSLVAFHQGCMDVRAGKSAMSIISGINLIEHPGPTLYLSSLGVLSPDGKSMSFDARANGYGRGEGVGTVIVKPLQAALRDGNRIRAIVRSTGSNQDGRTPGITVPNPSAQERLIHDVYRVADLDPRRTGYVEAHGTGTQVGDPLEVQAILAALGVARDSPLYVGSVKSVLGHLEGGAGLAGLISATLAVESKMIPPVAGLQSLNPKIPQRDDLKFAREATPWPRWDVRRASINSFGFGGTNAHAVVEDVEGFFADLFGQYIPGALPAPEVDTSLETTPMLSKPLMSGNASNQSVQSWSTSRLFVISAFDEAGIQRNTSALAEYLDSKSTTADTDGEDRLLNNLCHTLNEKRTRFDWRSYHVADSIASLRESLQHSRAIRQSSAPKPIRFVFTGQGANWAGMACDMLKYPLFRRRIQEAAAYLRELGSGWDLFERMTSKAGELDEPTFAQSSCVAVQVALVDLLASWKVVPETVVGHSSGEIAAAYCAGHISRQAAWKVAFCRGKVCARRTDGQGRMLAAAMPVHQLERVVARVNKGQPTSVKIGCYNSPRNLTLTGRYDDILRLKLELDDVGALNRMLPVKVAYHSDYMQDAAPEYLSLLGEILDGGDTIHKDASIQMISSVTGQPVPAGDVQQASYWVKNLVSPVRFCTALLASMEFPGTTGKREDTLIEIGPHSTLRSAIKESFAEVPEYQSVQYGSLLKRYETNGSTILHTLGMMFCSGHEISLAAINDRRVGTRKIPMLLTGLPGYAFDHSRSVRGTSRRIEQVKFPTYNRHELLGVPVEDSNPYEQRWRNVLRPDDLPWLRMNRMKGQIHFPGVAYILMATEALQQRVARTMTIPRVRIANMSILAPLQVPDSPSGVEIQVSIYPTNVRANGATDWATFRIISYDTAEKTWVEHCVGSVRAETGPPDLCVNTALRKQCAEPVDIAQMYHGFTAAGMDFGENLRNIQAMKVSPDRTACTATITAPSIAPQAHDQYPLHPCSFESILHALLYLCEASQSPMVTNYIEEVVIVNPNDTGAREFESFARRQRTSATTWTCDVSITTNVGDQDIQIKGLDLVQLPANNDDAVDAESFYTVNWRPDVKLLASADALHNSAPVDAAQHLPTFDEHEGYQLASAIFLQEAKEYVTRTGLPPLPTHHQAFMDWMEEEYQSINNGTTPLLDKSLLDGIRADPDRRKSLLDRVARQSARGELLVRVGTRMIDILEQKIDCLEVMFGPDNLMERTYEEGLPGQIAPAVAGYLHCLAHAQTGIKILEVGAGTGSATKVMLDSLRPTEAQDGGGLVSSVSSYDFTDISAAFFEKARARFHDWADILRPKLLNIEQDPAAQGFELGSYDLVIATHVLHATADLNVSLKNIRALLKEGGDLIVIENIQPKFMCSQLPFGLLPGWWRSVEPYRKTNPLILKEHWTEELQNAGLRPRLIINDTDDGINEMSAFVASPMPKVLDGSQPCSIIYSSTYPGQQQLALEVADRLPRSCTAAVVDLADISLDHSDTVGIVLVGCQGLDLSELTSSEYDRVKFILTSFQKLLWVTCDPTDVPKSALATGLVRSTRWEREHDNVNIILLSVSLSRPTPLTISSEIVRLCENAFISCKRVPPNSEYRIEGSNGVLLTNRLFPAAGINECIGLGSRPRSRQVPLGTVDHPIKLTSIGSQQPNGFHFIEDPQAHEPLDPDEVKIRIHAAGLDEEDADQLSRLIPGHGFGDQGSGTVVEIGHGVQGIQVGDQVMALRTGPSCALQTFFRTHSATVAKIPDGIRLSDAAALPLPWVTAYHSLVTVARLDSQEKVLIHPAIGATGQAAVQVASMLGATVYATVETDAQRQTLAEYGVEESHILDSASVEKQFGTQTSTQGVDVLLNLRRDGLEFLHLSCLSPFGRLVDISGSRAFPSQVNSPSNQSYYRVNMRELSQLKPESIRQTLRTVAQLLASPTIRPVAPFRVGYSQLQRVLSEIRRGSRGPWVIQPLPNDPIPPLGSHQFDPSASYLLIGGFGGLGRSVARWMHHRGAKHFIFFSRSGASSAAARELCADLRAAGCAVSDMICDTTDAQAVAKAMAQCEASMPPIRGCLQASMVLEDSMLSNMDHTRFLGAITPKVQGTINVASALAPIKSNLDFFVMLSSSAGIVGNRGQANYAAANTFLDAFAGQLVTQGYPATSVSLGSVLSVGWVAENQHKLRIAFAFGALSEDLLLSILEYHMDPAWGAAQSIQTCHTVVGVRSARDFQRQSIPLPGFMAHPLFSPLLAIAGRSQTAEQAAEAPVSQGLREASSMEAAVEVVTRAIVHKLARIMALSVQEIDPQRSLGSYGVDSLVTVDLKAWFQREVGVSIGSGELLGEMAMTQLAQQAADASQFLPAELRGKLRKNTDIHV</sequence>
<protein>
    <recommendedName>
        <fullName evidence="11">Highly reducing polyketide synthase otaA</fullName>
        <ecNumber evidence="7">2.3.1.-</ecNumber>
    </recommendedName>
    <alternativeName>
        <fullName evidence="10">Ochratoxin biosynthesis cluster protein 1</fullName>
    </alternativeName>
    <alternativeName>
        <fullName evidence="12">Ochratoxin biosynthesis cluster protein A</fullName>
    </alternativeName>
</protein>
<organism>
    <name type="scientific">Aspergillus niger (strain ATCC MYA-4892 / CBS 513.88 / FGSC A1513)</name>
    <dbReference type="NCBI Taxonomy" id="425011"/>
    <lineage>
        <taxon>Eukaryota</taxon>
        <taxon>Fungi</taxon>
        <taxon>Dikarya</taxon>
        <taxon>Ascomycota</taxon>
        <taxon>Pezizomycotina</taxon>
        <taxon>Eurotiomycetes</taxon>
        <taxon>Eurotiomycetidae</taxon>
        <taxon>Eurotiales</taxon>
        <taxon>Aspergillaceae</taxon>
        <taxon>Aspergillus</taxon>
        <taxon>Aspergillus subgen. Circumdati</taxon>
    </lineage>
</organism>
<evidence type="ECO:0000255" key="1"/>
<evidence type="ECO:0000255" key="2">
    <source>
        <dbReference type="PROSITE-ProRule" id="PRU00258"/>
    </source>
</evidence>
<evidence type="ECO:0000255" key="3">
    <source>
        <dbReference type="PROSITE-ProRule" id="PRU01019"/>
    </source>
</evidence>
<evidence type="ECO:0000255" key="4">
    <source>
        <dbReference type="PROSITE-ProRule" id="PRU01348"/>
    </source>
</evidence>
<evidence type="ECO:0000255" key="5">
    <source>
        <dbReference type="PROSITE-ProRule" id="PRU01363"/>
    </source>
</evidence>
<evidence type="ECO:0000269" key="6">
    <source>
    </source>
</evidence>
<evidence type="ECO:0000269" key="7">
    <source>
    </source>
</evidence>
<evidence type="ECO:0000269" key="8">
    <source>
    </source>
</evidence>
<evidence type="ECO:0000269" key="9">
    <source>
    </source>
</evidence>
<evidence type="ECO:0000303" key="10">
    <source>
    </source>
</evidence>
<evidence type="ECO:0000303" key="11">
    <source>
    </source>
</evidence>
<evidence type="ECO:0000303" key="12">
    <source>
    </source>
</evidence>
<evidence type="ECO:0000305" key="13"/>
<evidence type="ECO:0000305" key="14">
    <source>
    </source>
</evidence>
<evidence type="ECO:0000305" key="15">
    <source>
    </source>
</evidence>
<evidence type="ECO:0000305" key="16">
    <source>
    </source>
</evidence>
<keyword id="KW-0012">Acyltransferase</keyword>
<keyword id="KW-0489">Methyltransferase</keyword>
<keyword id="KW-0511">Multifunctional enzyme</keyword>
<keyword id="KW-0521">NADP</keyword>
<keyword id="KW-0560">Oxidoreductase</keyword>
<keyword id="KW-0596">Phosphopantetheine</keyword>
<keyword id="KW-0597">Phosphoprotein</keyword>
<keyword id="KW-1185">Reference proteome</keyword>
<keyword id="KW-0949">S-adenosyl-L-methionine</keyword>
<keyword id="KW-0808">Transferase</keyword>
<accession>A2R6H1</accession>
<gene>
    <name evidence="12" type="primary">otaA</name>
    <name evidence="10" type="synonym">ota1</name>
    <name type="ORF">An15g07920</name>
</gene>
<dbReference type="EC" id="2.3.1.-" evidence="7"/>
<dbReference type="EMBL" id="AM270352">
    <property type="protein sequence ID" value="CAK42679.1"/>
    <property type="status" value="ALT_SEQ"/>
    <property type="molecule type" value="Genomic_DNA"/>
</dbReference>
<dbReference type="SMR" id="A2R6H1"/>
<dbReference type="EnsemblFungi" id="CAK42679">
    <property type="protein sequence ID" value="CAK42679"/>
    <property type="gene ID" value="An15g07920"/>
</dbReference>
<dbReference type="HOGENOM" id="CLU_000022_31_0_1"/>
<dbReference type="Proteomes" id="UP000006706">
    <property type="component" value="Chromosome 3R"/>
</dbReference>
<dbReference type="GO" id="GO:0004315">
    <property type="term" value="F:3-oxoacyl-[acyl-carrier-protein] synthase activity"/>
    <property type="evidence" value="ECO:0007669"/>
    <property type="project" value="InterPro"/>
</dbReference>
<dbReference type="GO" id="GO:0003824">
    <property type="term" value="F:catalytic activity"/>
    <property type="evidence" value="ECO:0000304"/>
    <property type="project" value="UniProt"/>
</dbReference>
<dbReference type="GO" id="GO:0004312">
    <property type="term" value="F:fatty acid synthase activity"/>
    <property type="evidence" value="ECO:0007669"/>
    <property type="project" value="TreeGrafter"/>
</dbReference>
<dbReference type="GO" id="GO:0008168">
    <property type="term" value="F:methyltransferase activity"/>
    <property type="evidence" value="ECO:0007669"/>
    <property type="project" value="UniProtKB-KW"/>
</dbReference>
<dbReference type="GO" id="GO:0016491">
    <property type="term" value="F:oxidoreductase activity"/>
    <property type="evidence" value="ECO:0007669"/>
    <property type="project" value="UniProtKB-KW"/>
</dbReference>
<dbReference type="GO" id="GO:0031177">
    <property type="term" value="F:phosphopantetheine binding"/>
    <property type="evidence" value="ECO:0007669"/>
    <property type="project" value="InterPro"/>
</dbReference>
<dbReference type="GO" id="GO:0006633">
    <property type="term" value="P:fatty acid biosynthetic process"/>
    <property type="evidence" value="ECO:0007669"/>
    <property type="project" value="InterPro"/>
</dbReference>
<dbReference type="GO" id="GO:0032259">
    <property type="term" value="P:methylation"/>
    <property type="evidence" value="ECO:0007669"/>
    <property type="project" value="UniProtKB-KW"/>
</dbReference>
<dbReference type="GO" id="GO:1900818">
    <property type="term" value="P:ochratoxin A biosynthetic process"/>
    <property type="evidence" value="ECO:0000315"/>
    <property type="project" value="GO_Central"/>
</dbReference>
<dbReference type="GO" id="GO:0019748">
    <property type="term" value="P:secondary metabolic process"/>
    <property type="evidence" value="ECO:0000303"/>
    <property type="project" value="AspGD"/>
</dbReference>
<dbReference type="CDD" id="cd02440">
    <property type="entry name" value="AdoMet_MTases"/>
    <property type="match status" value="1"/>
</dbReference>
<dbReference type="CDD" id="cd05195">
    <property type="entry name" value="enoyl_red"/>
    <property type="match status" value="1"/>
</dbReference>
<dbReference type="CDD" id="cd00833">
    <property type="entry name" value="PKS"/>
    <property type="match status" value="1"/>
</dbReference>
<dbReference type="Gene3D" id="3.40.47.10">
    <property type="match status" value="1"/>
</dbReference>
<dbReference type="Gene3D" id="1.10.1200.10">
    <property type="entry name" value="ACP-like"/>
    <property type="match status" value="1"/>
</dbReference>
<dbReference type="Gene3D" id="3.40.366.10">
    <property type="entry name" value="Malonyl-Coenzyme A Acyl Carrier Protein, domain 2"/>
    <property type="match status" value="1"/>
</dbReference>
<dbReference type="Gene3D" id="3.90.180.10">
    <property type="entry name" value="Medium-chain alcohol dehydrogenases, catalytic domain"/>
    <property type="match status" value="1"/>
</dbReference>
<dbReference type="Gene3D" id="3.40.50.720">
    <property type="entry name" value="NAD(P)-binding Rossmann-like Domain"/>
    <property type="match status" value="1"/>
</dbReference>
<dbReference type="Gene3D" id="3.10.129.110">
    <property type="entry name" value="Polyketide synthase dehydratase"/>
    <property type="match status" value="1"/>
</dbReference>
<dbReference type="Gene3D" id="3.40.50.150">
    <property type="entry name" value="Vaccinia Virus protein VP39"/>
    <property type="match status" value="1"/>
</dbReference>
<dbReference type="InterPro" id="IPR001227">
    <property type="entry name" value="Ac_transferase_dom_sf"/>
</dbReference>
<dbReference type="InterPro" id="IPR036736">
    <property type="entry name" value="ACP-like_sf"/>
</dbReference>
<dbReference type="InterPro" id="IPR014043">
    <property type="entry name" value="Acyl_transferase_dom"/>
</dbReference>
<dbReference type="InterPro" id="IPR016035">
    <property type="entry name" value="Acyl_Trfase/lysoPLipase"/>
</dbReference>
<dbReference type="InterPro" id="IPR013154">
    <property type="entry name" value="ADH-like_N"/>
</dbReference>
<dbReference type="InterPro" id="IPR011032">
    <property type="entry name" value="GroES-like_sf"/>
</dbReference>
<dbReference type="InterPro" id="IPR018201">
    <property type="entry name" value="Ketoacyl_synth_AS"/>
</dbReference>
<dbReference type="InterPro" id="IPR014031">
    <property type="entry name" value="Ketoacyl_synth_C"/>
</dbReference>
<dbReference type="InterPro" id="IPR014030">
    <property type="entry name" value="Ketoacyl_synth_N"/>
</dbReference>
<dbReference type="InterPro" id="IPR016036">
    <property type="entry name" value="Malonyl_transacylase_ACP-bd"/>
</dbReference>
<dbReference type="InterPro" id="IPR013217">
    <property type="entry name" value="Methyltransf_12"/>
</dbReference>
<dbReference type="InterPro" id="IPR036291">
    <property type="entry name" value="NAD(P)-bd_dom_sf"/>
</dbReference>
<dbReference type="InterPro" id="IPR032821">
    <property type="entry name" value="PKS_assoc"/>
</dbReference>
<dbReference type="InterPro" id="IPR020841">
    <property type="entry name" value="PKS_Beta-ketoAc_synthase_dom"/>
</dbReference>
<dbReference type="InterPro" id="IPR042104">
    <property type="entry name" value="PKS_dehydratase_sf"/>
</dbReference>
<dbReference type="InterPro" id="IPR020807">
    <property type="entry name" value="PKS_DH"/>
</dbReference>
<dbReference type="InterPro" id="IPR049551">
    <property type="entry name" value="PKS_DH_C"/>
</dbReference>
<dbReference type="InterPro" id="IPR049552">
    <property type="entry name" value="PKS_DH_N"/>
</dbReference>
<dbReference type="InterPro" id="IPR020843">
    <property type="entry name" value="PKS_ER"/>
</dbReference>
<dbReference type="InterPro" id="IPR013968">
    <property type="entry name" value="PKS_KR"/>
</dbReference>
<dbReference type="InterPro" id="IPR049900">
    <property type="entry name" value="PKS_mFAS_DH"/>
</dbReference>
<dbReference type="InterPro" id="IPR050091">
    <property type="entry name" value="PKS_NRPS_Biosynth_Enz"/>
</dbReference>
<dbReference type="InterPro" id="IPR020806">
    <property type="entry name" value="PKS_PP-bd"/>
</dbReference>
<dbReference type="InterPro" id="IPR009081">
    <property type="entry name" value="PP-bd_ACP"/>
</dbReference>
<dbReference type="InterPro" id="IPR029063">
    <property type="entry name" value="SAM-dependent_MTases_sf"/>
</dbReference>
<dbReference type="InterPro" id="IPR016039">
    <property type="entry name" value="Thiolase-like"/>
</dbReference>
<dbReference type="PANTHER" id="PTHR43775:SF29">
    <property type="entry name" value="ASPERFURANONE POLYKETIDE SYNTHASE AFOG-RELATED"/>
    <property type="match status" value="1"/>
</dbReference>
<dbReference type="PANTHER" id="PTHR43775">
    <property type="entry name" value="FATTY ACID SYNTHASE"/>
    <property type="match status" value="1"/>
</dbReference>
<dbReference type="Pfam" id="PF23297">
    <property type="entry name" value="ACP_SdgA_C"/>
    <property type="match status" value="1"/>
</dbReference>
<dbReference type="Pfam" id="PF00698">
    <property type="entry name" value="Acyl_transf_1"/>
    <property type="match status" value="1"/>
</dbReference>
<dbReference type="Pfam" id="PF08240">
    <property type="entry name" value="ADH_N"/>
    <property type="match status" value="1"/>
</dbReference>
<dbReference type="Pfam" id="PF16197">
    <property type="entry name" value="KAsynt_C_assoc"/>
    <property type="match status" value="1"/>
</dbReference>
<dbReference type="Pfam" id="PF00109">
    <property type="entry name" value="ketoacyl-synt"/>
    <property type="match status" value="1"/>
</dbReference>
<dbReference type="Pfam" id="PF02801">
    <property type="entry name" value="Ketoacyl-synt_C"/>
    <property type="match status" value="1"/>
</dbReference>
<dbReference type="Pfam" id="PF08659">
    <property type="entry name" value="KR"/>
    <property type="match status" value="1"/>
</dbReference>
<dbReference type="Pfam" id="PF08242">
    <property type="entry name" value="Methyltransf_12"/>
    <property type="match status" value="1"/>
</dbReference>
<dbReference type="Pfam" id="PF21089">
    <property type="entry name" value="PKS_DH_N"/>
    <property type="match status" value="1"/>
</dbReference>
<dbReference type="Pfam" id="PF14765">
    <property type="entry name" value="PS-DH"/>
    <property type="match status" value="1"/>
</dbReference>
<dbReference type="SMART" id="SM00827">
    <property type="entry name" value="PKS_AT"/>
    <property type="match status" value="1"/>
</dbReference>
<dbReference type="SMART" id="SM00826">
    <property type="entry name" value="PKS_DH"/>
    <property type="match status" value="1"/>
</dbReference>
<dbReference type="SMART" id="SM00829">
    <property type="entry name" value="PKS_ER"/>
    <property type="match status" value="1"/>
</dbReference>
<dbReference type="SMART" id="SM00822">
    <property type="entry name" value="PKS_KR"/>
    <property type="match status" value="1"/>
</dbReference>
<dbReference type="SMART" id="SM00825">
    <property type="entry name" value="PKS_KS"/>
    <property type="match status" value="1"/>
</dbReference>
<dbReference type="SMART" id="SM00823">
    <property type="entry name" value="PKS_PP"/>
    <property type="match status" value="1"/>
</dbReference>
<dbReference type="SUPFAM" id="SSF47336">
    <property type="entry name" value="ACP-like"/>
    <property type="match status" value="1"/>
</dbReference>
<dbReference type="SUPFAM" id="SSF52151">
    <property type="entry name" value="FabD/lysophospholipase-like"/>
    <property type="match status" value="1"/>
</dbReference>
<dbReference type="SUPFAM" id="SSF50129">
    <property type="entry name" value="GroES-like"/>
    <property type="match status" value="1"/>
</dbReference>
<dbReference type="SUPFAM" id="SSF51735">
    <property type="entry name" value="NAD(P)-binding Rossmann-fold domains"/>
    <property type="match status" value="2"/>
</dbReference>
<dbReference type="SUPFAM" id="SSF55048">
    <property type="entry name" value="Probable ACP-binding domain of malonyl-CoA ACP transacylase"/>
    <property type="match status" value="1"/>
</dbReference>
<dbReference type="SUPFAM" id="SSF53335">
    <property type="entry name" value="S-adenosyl-L-methionine-dependent methyltransferases"/>
    <property type="match status" value="1"/>
</dbReference>
<dbReference type="SUPFAM" id="SSF53901">
    <property type="entry name" value="Thiolase-like"/>
    <property type="match status" value="1"/>
</dbReference>
<dbReference type="PROSITE" id="PS50075">
    <property type="entry name" value="CARRIER"/>
    <property type="match status" value="1"/>
</dbReference>
<dbReference type="PROSITE" id="PS00606">
    <property type="entry name" value="KS3_1"/>
    <property type="match status" value="1"/>
</dbReference>
<dbReference type="PROSITE" id="PS52004">
    <property type="entry name" value="KS3_2"/>
    <property type="match status" value="1"/>
</dbReference>
<dbReference type="PROSITE" id="PS52019">
    <property type="entry name" value="PKS_MFAS_DH"/>
    <property type="match status" value="1"/>
</dbReference>
<comment type="function">
    <text evidence="6 7 15 16">Highly reducing polyketide synthase; part of the gene cluster that mediates the biosynthesis of ochratoxin A (OTA), a mycotoxin composed of a chlorinated type I polyketide dihydroisocoumarin moiety linked to L-phenylalanine, and demonstrated to have nephrotoxic, immunotoxic, genotoxic, neurotoxic, and teratogenic properties (PubMed:27667988, PubMed:27959549). OtaA catalyzes the condensation of one acetate and 4 malonate units to form the isocoumarin group (PubMed:27959549). The pathway begins with the highly reducing polyketide synthase otaA that catalyzes the formation of the isocoumarin group during the initial stages of biosynthesis, starting from one acetate and 4 malonate units, to originate the characteristic pentaketide skeleton 7-methylmellein (7-MM) of the OTA molecule. The newly identified cyclase otaY might be involved in the polyketide cyclization reaction during the initial steps of the OTA biosynthesis. 7-MM is then oxidized into 7-carboxymellein (also called ochratoxin beta) by the cytochrome P450 monooxygenase otaC. The NRPS encoded by the otaB gene is involved in the linking of phenylalanine to the dihydroisocoumarin ring. The reaction catalyzed by NRPS results in the production of ochratoxin B (OTB), which is the non-chlorinated analog of OTA and which subsequently serves as the substrate of the halogenase otaD for chlorination activity to form the final molecular structure of OTA, containing a chlorine atom in the C-5 position of the molecule (Probable) (PubMed:27667988, PubMed:33391201).</text>
</comment>
<comment type="catalytic activity">
    <reaction evidence="7">
        <text>4 malonyl-CoA + acetyl-CoA + 5 NADPH + 9 H(+) = 7-methylmellein + 3 CO2 + 5 NADP(+) + 5 CoA + 4 H2O</text>
        <dbReference type="Rhea" id="RHEA:72767"/>
        <dbReference type="ChEBI" id="CHEBI:15377"/>
        <dbReference type="ChEBI" id="CHEBI:15378"/>
        <dbReference type="ChEBI" id="CHEBI:16526"/>
        <dbReference type="ChEBI" id="CHEBI:57287"/>
        <dbReference type="ChEBI" id="CHEBI:57288"/>
        <dbReference type="ChEBI" id="CHEBI:57384"/>
        <dbReference type="ChEBI" id="CHEBI:57783"/>
        <dbReference type="ChEBI" id="CHEBI:58349"/>
        <dbReference type="ChEBI" id="CHEBI:192524"/>
    </reaction>
    <physiologicalReaction direction="left-to-right" evidence="7">
        <dbReference type="Rhea" id="RHEA:72768"/>
    </physiologicalReaction>
</comment>
<comment type="cofactor">
    <cofactor evidence="1">
        <name>pantetheine 4'-phosphate</name>
        <dbReference type="ChEBI" id="CHEBI:47942"/>
    </cofactor>
    <text evidence="1">Binds 1 phosphopantetheine covalently.</text>
</comment>
<comment type="pathway">
    <text evidence="7">Mycotoxin biosynthesis.</text>
</comment>
<comment type="induction">
    <text evidence="7 8 9">Expression reaches reached its maximum level before ochratoxin A accumulation reaches its highest level (PubMed:27959549). Expression is positively regulated by the ochratoxin cluster transcription factor otaR1, probably via its binding to the conserved 5'-ACGT-3' bZIP binding motifs found in multiple copies (3 to 4) in the promoters of the OTA biosynthetic genes (PubMed:35143724). Expression is induced by sucrose, glucose or arabinose which repress the gal4 transcription factor, a negative regulator of the ochratoxin gene cluster (PubMed:36006213).</text>
</comment>
<comment type="domain">
    <text evidence="14">Multidomain protein; including a ketosynthase (KS) that catalyzes repeated decarboxylative condensation to elongate the polyketide backbone; a malonyl-CoA:ACP transacylase (MAT) that selects and transfers the extender unit malonyl-CoA; a dehydratase (DH) domain that reduces hydroxyl groups to enoyl groups; a methyltransferase (CMeT) domain responsible for the incorporation of methyl groups; an enoylreductase (ER) domain that reduces enoyl groups to alkyl group; a ketoreductase (KR) domain that catalyzes beta-ketoreduction steps; and an acyl-carrier protein (ACP) that serves as the tether of the growing and completed polyketide via its phosphopantetheinyl arm.</text>
</comment>
<comment type="disruption phenotype">
    <text evidence="7">Impairs the production of ochratoxin alpha, ochratoxin beta, and ochratoxin A (PubMed:27959549).</text>
</comment>
<comment type="sequence caution" evidence="13">
    <conflict type="erroneous gene model prediction">
        <sequence resource="EMBL-CDS" id="CAK42679"/>
    </conflict>
</comment>
<name>OTAA_ASPNC</name>
<reference key="1">
    <citation type="journal article" date="2007" name="Nat. Biotechnol.">
        <title>Genome sequencing and analysis of the versatile cell factory Aspergillus niger CBS 513.88.</title>
        <authorList>
            <person name="Pel H.J."/>
            <person name="de Winde J.H."/>
            <person name="Archer D.B."/>
            <person name="Dyer P.S."/>
            <person name="Hofmann G."/>
            <person name="Schaap P.J."/>
            <person name="Turner G."/>
            <person name="de Vries R.P."/>
            <person name="Albang R."/>
            <person name="Albermann K."/>
            <person name="Andersen M.R."/>
            <person name="Bendtsen J.D."/>
            <person name="Benen J.A.E."/>
            <person name="van den Berg M."/>
            <person name="Breestraat S."/>
            <person name="Caddick M.X."/>
            <person name="Contreras R."/>
            <person name="Cornell M."/>
            <person name="Coutinho P.M."/>
            <person name="Danchin E.G.J."/>
            <person name="Debets A.J.M."/>
            <person name="Dekker P."/>
            <person name="van Dijck P.W.M."/>
            <person name="van Dijk A."/>
            <person name="Dijkhuizen L."/>
            <person name="Driessen A.J.M."/>
            <person name="d'Enfert C."/>
            <person name="Geysens S."/>
            <person name="Goosen C."/>
            <person name="Groot G.S.P."/>
            <person name="de Groot P.W.J."/>
            <person name="Guillemette T."/>
            <person name="Henrissat B."/>
            <person name="Herweijer M."/>
            <person name="van den Hombergh J.P.T.W."/>
            <person name="van den Hondel C.A.M.J.J."/>
            <person name="van der Heijden R.T.J.M."/>
            <person name="van der Kaaij R.M."/>
            <person name="Klis F.M."/>
            <person name="Kools H.J."/>
            <person name="Kubicek C.P."/>
            <person name="van Kuyk P.A."/>
            <person name="Lauber J."/>
            <person name="Lu X."/>
            <person name="van der Maarel M.J.E.C."/>
            <person name="Meulenberg R."/>
            <person name="Menke H."/>
            <person name="Mortimer M.A."/>
            <person name="Nielsen J."/>
            <person name="Oliver S.G."/>
            <person name="Olsthoorn M."/>
            <person name="Pal K."/>
            <person name="van Peij N.N.M.E."/>
            <person name="Ram A.F.J."/>
            <person name="Rinas U."/>
            <person name="Roubos J.A."/>
            <person name="Sagt C.M.J."/>
            <person name="Schmoll M."/>
            <person name="Sun J."/>
            <person name="Ussery D."/>
            <person name="Varga J."/>
            <person name="Vervecken W."/>
            <person name="van de Vondervoort P.J.J."/>
            <person name="Wedler H."/>
            <person name="Woesten H.A.B."/>
            <person name="Zeng A.-P."/>
            <person name="van Ooyen A.J.J."/>
            <person name="Visser J."/>
            <person name="Stam H."/>
        </authorList>
    </citation>
    <scope>NUCLEOTIDE SEQUENCE [LARGE SCALE GENOMIC DNA]</scope>
    <source>
        <strain>ATCC MYA-4892 / CBS 513.88 / FGSC A1513</strain>
    </source>
</reference>
<reference key="2">
    <citation type="journal article" date="2012" name="Int. J. Food Microbiol.">
        <title>Strain-specific polyketide synthase genes of Aspergillus niger.</title>
        <authorList>
            <person name="Ferracin L.M."/>
            <person name="Fier C.B."/>
            <person name="Vieira M.L."/>
            <person name="Monteiro-Vitorello C.B."/>
            <person name="Varani A.M."/>
            <person name="Rossi M.M."/>
            <person name="Mueller-Santos M."/>
            <person name="Taniwaki M.H."/>
            <person name="Thie Iamanaka B."/>
            <person name="Fungaro M.H."/>
        </authorList>
    </citation>
    <scope>IDENTIFICATION</scope>
    <scope>DOMAIN</scope>
</reference>
<reference key="3">
    <citation type="journal article" date="2016" name="Front. Microbiol.">
        <title>Variation in fumonisin and ochratoxin production associated with differences in biosynthetic gene content in Aspergillus niger and A. welwitschiae isolates from multiple crop and geographic origins.</title>
        <authorList>
            <person name="Susca A."/>
            <person name="Proctor R.H."/>
            <person name="Morelli M."/>
            <person name="Haidukowski M."/>
            <person name="Gallo A."/>
            <person name="Logrieco A.F."/>
            <person name="Moretti A."/>
        </authorList>
    </citation>
    <scope>FUNCTION</scope>
</reference>
<reference key="4">
    <citation type="journal article" date="2016" name="J. Agric. Food Chem.">
        <title>A polyketide synthase encoded by the gene An15g07920 is involved in the biosynthesis of ochratoxin A in Aspergillus niger.</title>
        <authorList>
            <person name="Zhang J."/>
            <person name="Zhu L."/>
            <person name="Chen H."/>
            <person name="Li M."/>
            <person name="Zhu X."/>
            <person name="Gao Q."/>
            <person name="Wang D."/>
            <person name="Zhang Y."/>
        </authorList>
    </citation>
    <scope>FUNCTION</scope>
    <scope>DISRUPTION PHENOTYPE</scope>
    <scope>INDUCTION</scope>
    <scope>PATHWAY</scope>
</reference>
<reference key="5">
    <citation type="journal article" date="2020" name="Front. Microbiol.">
        <title>Comparative genomic analysis of ochratoxin A biosynthetic cluster in producing fungi: new evidence of a cyclase gene involvement.</title>
        <authorList>
            <person name="Ferrara M."/>
            <person name="Gallo A."/>
            <person name="Perrone G."/>
            <person name="Magista D."/>
            <person name="Baker S.E."/>
        </authorList>
    </citation>
    <scope>NOMENCLATURE</scope>
    <scope>FUNCTION</scope>
</reference>
<reference key="6">
    <citation type="journal article" date="2022" name="J. Agric. Food Chem.">
        <title>Deletion and overexpression of the AnOTAbzip gene, a positive regulator of ochratoxin A biosynthesis in Aspergillus niger.</title>
        <authorList>
            <person name="Zhang J."/>
            <person name="Li L."/>
            <person name="Yang Y."/>
            <person name="Zhao C."/>
            <person name="Hu J."/>
            <person name="Xue X."/>
            <person name="Gao Q."/>
            <person name="Wang D."/>
            <person name="Zhuang Z."/>
            <person name="Zhang Y."/>
        </authorList>
    </citation>
    <scope>INDUCTION</scope>
</reference>
<reference key="7">
    <citation type="journal article" date="2022" name="Toxins">
        <title>Insights into the Underlying Mechanism of Ochratoxin A Production in Aspergillus niger CBS 513.88 Using Different Carbon Sources.</title>
        <authorList>
            <person name="Wei S."/>
            <person name="Hu C."/>
            <person name="Nie P."/>
            <person name="Zhai H."/>
            <person name="Zhang S."/>
            <person name="Li N."/>
            <person name="Lv Y."/>
            <person name="Hu Y."/>
        </authorList>
    </citation>
    <scope>INDUCTION</scope>
</reference>
<proteinExistence type="evidence at transcript level"/>
<feature type="chain" id="PRO_0000440589" description="Highly reducing polyketide synthase otaA">
    <location>
        <begin position="1"/>
        <end position="2550"/>
    </location>
</feature>
<feature type="domain" description="Ketosynthase family 3 (KS3)" evidence="4 14">
    <location>
        <begin position="9"/>
        <end position="431"/>
    </location>
</feature>
<feature type="domain" description="PKS/mFAS DH" evidence="5">
    <location>
        <begin position="959"/>
        <end position="1253"/>
    </location>
</feature>
<feature type="domain" description="Carrier" evidence="2">
    <location>
        <begin position="2454"/>
        <end position="2531"/>
    </location>
</feature>
<feature type="region of interest" description="Malonyl-CoA:ACP transacylase (MAT) domain" evidence="1 14">
    <location>
        <begin position="572"/>
        <end position="894"/>
    </location>
</feature>
<feature type="region of interest" description="Dehydratase (DH) domain" evidence="1 14">
    <location>
        <begin position="959"/>
        <end position="1252"/>
    </location>
</feature>
<feature type="region of interest" description="N-terminal hotdog fold" evidence="5">
    <location>
        <begin position="959"/>
        <end position="1094"/>
    </location>
</feature>
<feature type="region of interest" description="C-terminal hotdog fold" evidence="5">
    <location>
        <begin position="1107"/>
        <end position="1253"/>
    </location>
</feature>
<feature type="region of interest" description="Methyltransferase (CMeT) domain" evidence="1 14">
    <location>
        <begin position="1433"/>
        <end position="1612"/>
    </location>
</feature>
<feature type="region of interest" description="Enoyl reductase (ER) (ER) domain" evidence="1 14">
    <location>
        <begin position="1859"/>
        <end position="1919"/>
    </location>
</feature>
<feature type="region of interest" description="Ketoreductase (KR) domain" evidence="1 14">
    <location>
        <begin position="2166"/>
        <end position="2345"/>
    </location>
</feature>
<feature type="active site" description="For beta-ketoacyl synthase activity" evidence="4">
    <location>
        <position position="182"/>
    </location>
</feature>
<feature type="active site" description="For beta-ketoacyl synthase activity" evidence="4">
    <location>
        <position position="317"/>
    </location>
</feature>
<feature type="active site" description="For beta-ketoacyl synthase activity" evidence="4">
    <location>
        <position position="355"/>
    </location>
</feature>
<feature type="binding site" evidence="3">
    <location>
        <position position="1420"/>
    </location>
    <ligand>
        <name>S-adenosyl-L-methionine</name>
        <dbReference type="ChEBI" id="CHEBI:59789"/>
    </ligand>
</feature>
<feature type="binding site" evidence="3">
    <location>
        <position position="1442"/>
    </location>
    <ligand>
        <name>S-adenosyl-L-methionine</name>
        <dbReference type="ChEBI" id="CHEBI:59789"/>
    </ligand>
</feature>
<feature type="modified residue" description="O-(pantetheine 4'-phosphoryl)serine" evidence="2">
    <location>
        <position position="2491"/>
    </location>
</feature>